<keyword id="KW-0010">Activator</keyword>
<keyword id="KW-0025">Alternative splicing</keyword>
<keyword id="KW-0175">Coiled coil</keyword>
<keyword id="KW-0217">Developmental protein</keyword>
<keyword id="KW-0539">Nucleus</keyword>
<keyword id="KW-1185">Reference proteome</keyword>
<keyword id="KW-0804">Transcription</keyword>
<keyword id="KW-0805">Transcription regulation</keyword>
<accession>Q9NAL4</accession>
<accession>G2HJZ8</accession>
<accession>G2HJZ9</accession>
<evidence type="ECO:0000250" key="1"/>
<evidence type="ECO:0000255" key="2"/>
<evidence type="ECO:0000305" key="3"/>
<organism>
    <name type="scientific">Caenorhabditis elegans</name>
    <dbReference type="NCBI Taxonomy" id="6239"/>
    <lineage>
        <taxon>Eukaryota</taxon>
        <taxon>Metazoa</taxon>
        <taxon>Ecdysozoa</taxon>
        <taxon>Nematoda</taxon>
        <taxon>Chromadorea</taxon>
        <taxon>Rhabditida</taxon>
        <taxon>Rhabditina</taxon>
        <taxon>Rhabditomorpha</taxon>
        <taxon>Rhabditoidea</taxon>
        <taxon>Rhabditidae</taxon>
        <taxon>Peloderinae</taxon>
        <taxon>Caenorhabditis</taxon>
    </lineage>
</organism>
<reference key="1">
    <citation type="journal article" date="1998" name="Science">
        <title>Genome sequence of the nematode C. elegans: a platform for investigating biology.</title>
        <authorList>
            <consortium name="The C. elegans sequencing consortium"/>
        </authorList>
    </citation>
    <scope>NUCLEOTIDE SEQUENCE [LARGE SCALE GENOMIC DNA]</scope>
    <scope>ALTERNATIVE SPLICING</scope>
    <source>
        <strain>Bristol N2</strain>
    </source>
</reference>
<name>MED17_CAEEL</name>
<protein>
    <recommendedName>
        <fullName>Mediator of RNA polymerase II transcription subunit 17</fullName>
    </recommendedName>
    <alternativeName>
        <fullName>Mediator complex subunit 17</fullName>
    </alternativeName>
</protein>
<proteinExistence type="inferred from homology"/>
<sequence length="667" mass="77018">MEDGDEVVEPIEPESEDIVNLTKRLGVDLVLESNDDWKIQEIGFDGVERYLQPETFTDHVGKLARKVEWTKLVGTKSPYENSKVDPEDELDDENVAKGGLNEELVTPEAGPWSSVAKYLHESLNQLNSLLDVISVTKSTDYMKALTVLDPITVQEPTPETISTNRGTQWIWKRRALQEAVQVLDMAQKQRQRASSNLGLSADYMAHLQRTKFFEELREMREIWRVRKVGDYICGDLSYHIFGWKYDTPAIFDISRRSLSNNMENLSIIEVSVPKDLARRSMLAVSIVQDDIQSGNGLFRDPKDKKYTYSYRESDSEKVKLLHWKDSLKWAQNTLLLRDVFKTICTDAIKLRNRLSIIRDNVLLIHLFDDYLLRFELQWFPFQTGEIKEEGDIYLNRVLREMIIGFECTKFIRPQFFCSMPVTHLPEALDLRGCGGFNTAQIEERAVRSRSILQRMLDVASHRALVTMVSDVAERVSRISLDPTVQYRWLNCGRTTSRMMFNMTSKDFEMYIGTISSVRSVFFANISSDGVEVETKDGIKMKCQRDPARVMYACQYAMCCYSVTMVSTMSRNNNWVTPFQTMCANVFALDERGNPAPNIVLCNQAATRSILFVFHVGMEPEVFVRRFIVNEETMKPEEHEWKKLCYSRLHGATLCRKIDALLVFLRDH</sequence>
<comment type="function">
    <text evidence="1">Component of the Mediator complex, a coactivator involved in regulated gene transcription of nearly all RNA polymerase II-dependent genes. Mediator functions as a bridge to convey information from gene-specific regulatory proteins to the basal RNA polymerase II transcription machinery. Mediator is recruited to promoters by direct interactions with regulatory proteins and serves as a scaffold for the assembly of a functional preinitiation complex with RNA polymerase II and the general transcription factors (By similarity).</text>
</comment>
<comment type="subunit">
    <text evidence="1">Component of the Mediator complex.</text>
</comment>
<comment type="subcellular location">
    <subcellularLocation>
        <location evidence="1">Nucleus</location>
    </subcellularLocation>
</comment>
<comment type="alternative products">
    <event type="alternative splicing"/>
    <isoform>
        <id>Q9NAL4-1</id>
        <name>b</name>
        <sequence type="displayed"/>
    </isoform>
    <isoform>
        <id>Q9NAL4-2</id>
        <name>a</name>
        <sequence type="described" ref="VSP_044225"/>
    </isoform>
</comment>
<comment type="similarity">
    <text evidence="3">Belongs to the Mediator complex subunit 17 family.</text>
</comment>
<gene>
    <name type="primary">mdt-17</name>
    <name type="ORF">Y113G7B.18</name>
</gene>
<feature type="chain" id="PRO_0000304707" description="Mediator of RNA polymerase II transcription subunit 17">
    <location>
        <begin position="1"/>
        <end position="667"/>
    </location>
</feature>
<feature type="coiled-coil region" evidence="2">
    <location>
        <begin position="172"/>
        <end position="197"/>
    </location>
</feature>
<feature type="splice variant" id="VSP_044225" description="In isoform a." evidence="3">
    <location>
        <begin position="514"/>
        <end position="516"/>
    </location>
</feature>
<dbReference type="EMBL" id="AL110477">
    <property type="protein sequence ID" value="CCD31130.1"/>
    <property type="molecule type" value="Genomic_DNA"/>
</dbReference>
<dbReference type="EMBL" id="AL110477">
    <property type="protein sequence ID" value="CCD31131.1"/>
    <property type="molecule type" value="Genomic_DNA"/>
</dbReference>
<dbReference type="RefSeq" id="NP_001256909.1">
    <property type="nucleotide sequence ID" value="NM_001269980.1"/>
</dbReference>
<dbReference type="RefSeq" id="NP_001256910.1">
    <molecule id="Q9NAL4-1"/>
    <property type="nucleotide sequence ID" value="NM_001269981.5"/>
</dbReference>
<dbReference type="RefSeq" id="NP_001379536.1">
    <molecule id="Q9NAL4-2"/>
    <property type="nucleotide sequence ID" value="NM_001392708.1"/>
</dbReference>
<dbReference type="SMR" id="Q9NAL4"/>
<dbReference type="BioGRID" id="45285">
    <property type="interactions" value="5"/>
</dbReference>
<dbReference type="FunCoup" id="Q9NAL4">
    <property type="interactions" value="2742"/>
</dbReference>
<dbReference type="IntAct" id="Q9NAL4">
    <property type="interactions" value="2"/>
</dbReference>
<dbReference type="STRING" id="6239.Y113G7B.18b.1"/>
<dbReference type="PaxDb" id="6239-Y113G7B.18b.2"/>
<dbReference type="PeptideAtlas" id="Q9NAL4"/>
<dbReference type="EnsemblMetazoa" id="Y113G7B.18a.1">
    <molecule id="Q9NAL4-2"/>
    <property type="protein sequence ID" value="Y113G7B.18a.1"/>
    <property type="gene ID" value="WBGene00007017"/>
</dbReference>
<dbReference type="EnsemblMetazoa" id="Y113G7B.18a.2">
    <molecule id="Q9NAL4-2"/>
    <property type="protein sequence ID" value="Y113G7B.18a.2"/>
    <property type="gene ID" value="WBGene00007017"/>
</dbReference>
<dbReference type="EnsemblMetazoa" id="Y113G7B.18b.1">
    <molecule id="Q9NAL4-1"/>
    <property type="protein sequence ID" value="Y113G7B.18b.1"/>
    <property type="gene ID" value="WBGene00007017"/>
</dbReference>
<dbReference type="EnsemblMetazoa" id="Y113G7B.18b.2">
    <molecule id="Q9NAL4-1"/>
    <property type="protein sequence ID" value="Y113G7B.18b.2"/>
    <property type="gene ID" value="WBGene00007017"/>
</dbReference>
<dbReference type="GeneID" id="180325"/>
<dbReference type="KEGG" id="cel:CELE_Y113G7B.18"/>
<dbReference type="UCSC" id="Y113G7B.18.2">
    <molecule id="Q9NAL4-1"/>
    <property type="organism name" value="c. elegans"/>
</dbReference>
<dbReference type="AGR" id="WB:WBGene00007017"/>
<dbReference type="CTD" id="180325"/>
<dbReference type="WormBase" id="Y113G7B.18a">
    <molecule id="Q9NAL4-2"/>
    <property type="protein sequence ID" value="CE46431"/>
    <property type="gene ID" value="WBGene00007017"/>
    <property type="gene designation" value="mdt-17"/>
</dbReference>
<dbReference type="WormBase" id="Y113G7B.18b">
    <molecule id="Q9NAL4-1"/>
    <property type="protein sequence ID" value="CE46521"/>
    <property type="gene ID" value="WBGene00007017"/>
    <property type="gene designation" value="mdt-17"/>
</dbReference>
<dbReference type="eggNOG" id="KOG4512">
    <property type="taxonomic scope" value="Eukaryota"/>
</dbReference>
<dbReference type="GeneTree" id="ENSGT00390000011810"/>
<dbReference type="InParanoid" id="Q9NAL4"/>
<dbReference type="OMA" id="CNQSATR"/>
<dbReference type="OrthoDB" id="10058398at2759"/>
<dbReference type="PhylomeDB" id="Q9NAL4"/>
<dbReference type="PRO" id="PR:Q9NAL4"/>
<dbReference type="Proteomes" id="UP000001940">
    <property type="component" value="Chromosome V"/>
</dbReference>
<dbReference type="Bgee" id="WBGene00007017">
    <property type="expression patterns" value="Expressed in embryo and 4 other cell types or tissues"/>
</dbReference>
<dbReference type="GO" id="GO:0070847">
    <property type="term" value="C:core mediator complex"/>
    <property type="evidence" value="ECO:0000318"/>
    <property type="project" value="GO_Central"/>
</dbReference>
<dbReference type="GO" id="GO:0016592">
    <property type="term" value="C:mediator complex"/>
    <property type="evidence" value="ECO:0000318"/>
    <property type="project" value="GO_Central"/>
</dbReference>
<dbReference type="GO" id="GO:0003712">
    <property type="term" value="F:transcription coregulator activity"/>
    <property type="evidence" value="ECO:0000318"/>
    <property type="project" value="GO_Central"/>
</dbReference>
<dbReference type="GO" id="GO:0006357">
    <property type="term" value="P:regulation of transcription by RNA polymerase II"/>
    <property type="evidence" value="ECO:0000318"/>
    <property type="project" value="GO_Central"/>
</dbReference>
<dbReference type="InterPro" id="IPR019313">
    <property type="entry name" value="Mediator_Med17"/>
</dbReference>
<dbReference type="PANTHER" id="PTHR13114">
    <property type="entry name" value="MEDIATOR OF RNA POLYMERASE II TRANSCRIPTION SUBUNIT 17"/>
    <property type="match status" value="1"/>
</dbReference>
<dbReference type="PANTHER" id="PTHR13114:SF7">
    <property type="entry name" value="MEDIATOR OF RNA POLYMERASE II TRANSCRIPTION SUBUNIT 17"/>
    <property type="match status" value="1"/>
</dbReference>